<proteinExistence type="inferred from homology"/>
<gene>
    <name type="ordered locus">Bcenmc03_1634</name>
</gene>
<accession>B1K153</accession>
<sequence length="150" mass="16238">MQVLVDADACPAVIKDMLFRAARRAEICVTLVANQFLRTPPSPFIKAVQVPAGFDVADARIVELAEPGDLVITADIPLAAAVLDKGAHALDPRGNWFSRENIEERLSTRAMMDQLRSAGIDTGGPAPFSARDGKTFASQLDRFLARHAPR</sequence>
<organism>
    <name type="scientific">Burkholderia orbicola (strain MC0-3)</name>
    <dbReference type="NCBI Taxonomy" id="406425"/>
    <lineage>
        <taxon>Bacteria</taxon>
        <taxon>Pseudomonadati</taxon>
        <taxon>Pseudomonadota</taxon>
        <taxon>Betaproteobacteria</taxon>
        <taxon>Burkholderiales</taxon>
        <taxon>Burkholderiaceae</taxon>
        <taxon>Burkholderia</taxon>
        <taxon>Burkholderia cepacia complex</taxon>
        <taxon>Burkholderia orbicola</taxon>
    </lineage>
</organism>
<protein>
    <recommendedName>
        <fullName evidence="1">UPF0178 protein Bcenmc03_1634</fullName>
    </recommendedName>
</protein>
<reference key="1">
    <citation type="submission" date="2008-02" db="EMBL/GenBank/DDBJ databases">
        <title>Complete sequence of chromosome 1 of Burkholderia cenocepacia MC0-3.</title>
        <authorList>
            <person name="Copeland A."/>
            <person name="Lucas S."/>
            <person name="Lapidus A."/>
            <person name="Barry K."/>
            <person name="Bruce D."/>
            <person name="Goodwin L."/>
            <person name="Glavina del Rio T."/>
            <person name="Dalin E."/>
            <person name="Tice H."/>
            <person name="Pitluck S."/>
            <person name="Chain P."/>
            <person name="Malfatti S."/>
            <person name="Shin M."/>
            <person name="Vergez L."/>
            <person name="Schmutz J."/>
            <person name="Larimer F."/>
            <person name="Land M."/>
            <person name="Hauser L."/>
            <person name="Kyrpides N."/>
            <person name="Mikhailova N."/>
            <person name="Tiedje J."/>
            <person name="Richardson P."/>
        </authorList>
    </citation>
    <scope>NUCLEOTIDE SEQUENCE [LARGE SCALE GENOMIC DNA]</scope>
    <source>
        <strain>MC0-3</strain>
    </source>
</reference>
<comment type="similarity">
    <text evidence="1">Belongs to the UPF0178 family.</text>
</comment>
<name>Y1634_BURO0</name>
<evidence type="ECO:0000255" key="1">
    <source>
        <dbReference type="HAMAP-Rule" id="MF_00489"/>
    </source>
</evidence>
<dbReference type="EMBL" id="CP000958">
    <property type="protein sequence ID" value="ACA90807.1"/>
    <property type="molecule type" value="Genomic_DNA"/>
</dbReference>
<dbReference type="RefSeq" id="WP_011545395.1">
    <property type="nucleotide sequence ID" value="NC_010508.1"/>
</dbReference>
<dbReference type="GeneID" id="83048427"/>
<dbReference type="KEGG" id="bcm:Bcenmc03_1634"/>
<dbReference type="HOGENOM" id="CLU_106619_2_1_4"/>
<dbReference type="Proteomes" id="UP000002169">
    <property type="component" value="Chromosome 1"/>
</dbReference>
<dbReference type="CDD" id="cd18720">
    <property type="entry name" value="PIN_YqxD-like"/>
    <property type="match status" value="1"/>
</dbReference>
<dbReference type="HAMAP" id="MF_00489">
    <property type="entry name" value="UPF0178"/>
    <property type="match status" value="1"/>
</dbReference>
<dbReference type="InterPro" id="IPR003791">
    <property type="entry name" value="UPF0178"/>
</dbReference>
<dbReference type="NCBIfam" id="NF001095">
    <property type="entry name" value="PRK00124.1"/>
    <property type="match status" value="1"/>
</dbReference>
<dbReference type="PANTHER" id="PTHR35146">
    <property type="entry name" value="UPF0178 PROTEIN YAII"/>
    <property type="match status" value="1"/>
</dbReference>
<dbReference type="PANTHER" id="PTHR35146:SF1">
    <property type="entry name" value="UPF0178 PROTEIN YAII"/>
    <property type="match status" value="1"/>
</dbReference>
<dbReference type="Pfam" id="PF02639">
    <property type="entry name" value="DUF188"/>
    <property type="match status" value="1"/>
</dbReference>
<feature type="chain" id="PRO_1000126180" description="UPF0178 protein Bcenmc03_1634">
    <location>
        <begin position="1"/>
        <end position="150"/>
    </location>
</feature>